<organism>
    <name type="scientific">Streptococcus pyogenes serotype M6 (strain ATCC BAA-946 / MGAS10394)</name>
    <dbReference type="NCBI Taxonomy" id="286636"/>
    <lineage>
        <taxon>Bacteria</taxon>
        <taxon>Bacillati</taxon>
        <taxon>Bacillota</taxon>
        <taxon>Bacilli</taxon>
        <taxon>Lactobacillales</taxon>
        <taxon>Streptococcaceae</taxon>
        <taxon>Streptococcus</taxon>
    </lineage>
</organism>
<comment type="function">
    <text evidence="1">Could be a nuclease involved in processing of the 5'-end of pre-16S rRNA.</text>
</comment>
<comment type="subcellular location">
    <subcellularLocation>
        <location evidence="1">Cytoplasm</location>
    </subcellularLocation>
</comment>
<comment type="similarity">
    <text evidence="1">Belongs to the YqgF nuclease family.</text>
</comment>
<accession>Q5X9I3</accession>
<dbReference type="EC" id="3.1.-.-" evidence="1"/>
<dbReference type="EMBL" id="CP000003">
    <property type="protein sequence ID" value="AAT87930.1"/>
    <property type="molecule type" value="Genomic_DNA"/>
</dbReference>
<dbReference type="SMR" id="Q5X9I3"/>
<dbReference type="KEGG" id="spa:M6_Spy1795"/>
<dbReference type="HOGENOM" id="CLU_098240_2_0_9"/>
<dbReference type="Proteomes" id="UP000001167">
    <property type="component" value="Chromosome"/>
</dbReference>
<dbReference type="GO" id="GO:0005829">
    <property type="term" value="C:cytosol"/>
    <property type="evidence" value="ECO:0007669"/>
    <property type="project" value="TreeGrafter"/>
</dbReference>
<dbReference type="GO" id="GO:0004518">
    <property type="term" value="F:nuclease activity"/>
    <property type="evidence" value="ECO:0007669"/>
    <property type="project" value="UniProtKB-KW"/>
</dbReference>
<dbReference type="GO" id="GO:0000967">
    <property type="term" value="P:rRNA 5'-end processing"/>
    <property type="evidence" value="ECO:0007669"/>
    <property type="project" value="UniProtKB-UniRule"/>
</dbReference>
<dbReference type="CDD" id="cd16964">
    <property type="entry name" value="YqgF"/>
    <property type="match status" value="1"/>
</dbReference>
<dbReference type="FunFam" id="3.30.420.140:FF:000003">
    <property type="entry name" value="Putative pre-16S rRNA nuclease"/>
    <property type="match status" value="1"/>
</dbReference>
<dbReference type="Gene3D" id="3.30.420.140">
    <property type="entry name" value="YqgF/RNase H-like domain"/>
    <property type="match status" value="1"/>
</dbReference>
<dbReference type="HAMAP" id="MF_00651">
    <property type="entry name" value="Nuclease_YqgF"/>
    <property type="match status" value="1"/>
</dbReference>
<dbReference type="InterPro" id="IPR012337">
    <property type="entry name" value="RNaseH-like_sf"/>
</dbReference>
<dbReference type="InterPro" id="IPR005227">
    <property type="entry name" value="YqgF"/>
</dbReference>
<dbReference type="InterPro" id="IPR006641">
    <property type="entry name" value="YqgF/RNaseH-like_dom"/>
</dbReference>
<dbReference type="InterPro" id="IPR037027">
    <property type="entry name" value="YqgF/RNaseH-like_dom_sf"/>
</dbReference>
<dbReference type="NCBIfam" id="TIGR00250">
    <property type="entry name" value="RNAse_H_YqgF"/>
    <property type="match status" value="1"/>
</dbReference>
<dbReference type="PANTHER" id="PTHR33317">
    <property type="entry name" value="POLYNUCLEOTIDYL TRANSFERASE, RIBONUCLEASE H-LIKE SUPERFAMILY PROTEIN"/>
    <property type="match status" value="1"/>
</dbReference>
<dbReference type="PANTHER" id="PTHR33317:SF4">
    <property type="entry name" value="POLYNUCLEOTIDYL TRANSFERASE, RIBONUCLEASE H-LIKE SUPERFAMILY PROTEIN"/>
    <property type="match status" value="1"/>
</dbReference>
<dbReference type="Pfam" id="PF03652">
    <property type="entry name" value="RuvX"/>
    <property type="match status" value="1"/>
</dbReference>
<dbReference type="SMART" id="SM00732">
    <property type="entry name" value="YqgFc"/>
    <property type="match status" value="1"/>
</dbReference>
<dbReference type="SUPFAM" id="SSF53098">
    <property type="entry name" value="Ribonuclease H-like"/>
    <property type="match status" value="1"/>
</dbReference>
<keyword id="KW-0963">Cytoplasm</keyword>
<keyword id="KW-0378">Hydrolase</keyword>
<keyword id="KW-0540">Nuclease</keyword>
<keyword id="KW-0690">Ribosome biogenesis</keyword>
<name>YQGF_STRP6</name>
<feature type="chain" id="PRO_0000172153" description="Putative pre-16S rRNA nuclease">
    <location>
        <begin position="1"/>
        <end position="139"/>
    </location>
</feature>
<protein>
    <recommendedName>
        <fullName evidence="1">Putative pre-16S rRNA nuclease</fullName>
        <ecNumber evidence="1">3.1.-.-</ecNumber>
    </recommendedName>
</protein>
<sequence>MRIMGLDVGSKTVGVAISDPLGFTAQGLEIIKIDEEKAEFGFTRLEELVKQYQVEQFVIGLPKNMNNTNGPRVDASITYGNHIEHLFGLPVHYQDERLTTVEAERMLIEQADISRGKRKKVIDKLAAQLILQNYLNRNF</sequence>
<proteinExistence type="inferred from homology"/>
<evidence type="ECO:0000255" key="1">
    <source>
        <dbReference type="HAMAP-Rule" id="MF_00651"/>
    </source>
</evidence>
<gene>
    <name type="ordered locus">M6_Spy1795</name>
</gene>
<reference key="1">
    <citation type="journal article" date="2004" name="J. Infect. Dis.">
        <title>Progress toward characterization of the group A Streptococcus metagenome: complete genome sequence of a macrolide-resistant serotype M6 strain.</title>
        <authorList>
            <person name="Banks D.J."/>
            <person name="Porcella S.F."/>
            <person name="Barbian K.D."/>
            <person name="Beres S.B."/>
            <person name="Philips L.E."/>
            <person name="Voyich J.M."/>
            <person name="DeLeo F.R."/>
            <person name="Martin J.M."/>
            <person name="Somerville G.A."/>
            <person name="Musser J.M."/>
        </authorList>
    </citation>
    <scope>NUCLEOTIDE SEQUENCE [LARGE SCALE GENOMIC DNA]</scope>
    <source>
        <strain>ATCC BAA-946 / MGAS10394</strain>
    </source>
</reference>